<comment type="function">
    <text evidence="2 4">Receptor for glucocorticoids (GC). Has a dual mode of action: as a transcription factor that binds to glucocorticoid response elements (GRE), both for nuclear and mitochondrial DNA, and as a modulator of other transcription factors. Affects inflammatory responses, cellular proliferation and differentiation in target tissues. Involved in chromatin remodeling. Plays a role in rapid mRNA degradation by binding to the 5' UTR of target mRNAs and interacting with PNRC2 in a ligand-dependent manner which recruits the RNA helicase UPF1 and the mRNA-decapping enzyme DCP1A, leading to RNA decay. Could act as a coactivator for STAT5-dependent transcription upon growth hormone (GH) stimulation and could reveal an essential role of hepatic GR in the control of body growth. Mediates glucocorticoid-induced apoptosis. Promotes accurate chromosome segregation during mitosis. May act as a tumor suppressor. May play a negative role in adipogenesis through the regulation of lipolytic and antilipogenic gene expression.</text>
</comment>
<comment type="subunit">
    <text evidence="2 3 4">Heteromultimeric cytoplasmic complex with HSP90AA1, HSPA1A/HSPA1B, and FKBP5 or another immunophilin such as PPID, STIP1, or the immunophilin homolog PPP5C. Upon ligand binding FKBP5 dissociates from the complex and FKBP4 takes its place, thereby linking the complex to dynein and mediating transport to the nucleus, where the complex dissociates. Probably forms a complex composed of chaperones HSP90 and HSP70, co-chaperones CDC37, PPP5C, TSC1 and client protein TSC2, CDK4, AKT, RAF1 and NR3C1; this complex does not contain co-chaperones STIP1/HOP and PTGES3/p23. Directly interacts with UNC45A. Binds to DNA as a homodimer, and as heterodimer with NR3C2 or the retinoid X receptor. Binds STAT5A and STAT5B homodimers and heterodimers. Interacts with NRIP1, POU2F1, POU2F2 and TRIM28. Interacts with several coactivator complexes, including the SMARCA4 complex, CREBBP/EP300, TADA2L (Ada complex) and p160 coactivators such as NCOA2 and NCOA6. Interaction with BAG1 inhibits transactivation. Interacts with HEXIM1 and TGFB1I1. Interacts with NCOA1. Interacts with NCOA3, SMARCA4, SMARCC1, SMARCD1, and SMARCE1. Interacts with CLOCK, CRY1 and CRY2 in a ligand-dependent fashion. Interacts with CIART. Interacts with RWDD3. Interacts with UBE2I/UBC9 and this interaction is enhanced in the presence of RWDD3. Interacts with GRIP1. Interacts with NR4A3 (via nuclear receptor DNA-binding domain), represses transcription activity of NR4A3 on the POMC promoter Nur response element (NurRE). Directly interacts with PNRC2 to attract and form a complex with UPF1 and DCP1A; the interaction leads to rapid mRNA degradation. Interacts with GSK3B. Interacts with FNIP1 and FNIP2. Interacts (via C-terminus) with HNRNPU (via C-terminus). Interacts with MCM3AP (By similarity). Interacts (via domain NR LBD) with HSP90AA1 and HSP90AB1 (By similarity). In the absence of hormonal ligand, interacts with TACC1 (By similarity). Interacts (via NR LBD domain) with ZNF764 (via KRAB domain); the interaction regulates transcription factor activity of NR3C1 by directing its actions toward certain biologic pathways (By similarity).</text>
</comment>
<comment type="subcellular location">
    <subcellularLocation>
        <location evidence="2">Cytoplasm</location>
    </subcellularLocation>
    <subcellularLocation>
        <location evidence="2">Nucleus</location>
    </subcellularLocation>
    <subcellularLocation>
        <location evidence="2">Mitochondrion</location>
    </subcellularLocation>
    <subcellularLocation>
        <location evidence="2">Cytoplasm</location>
        <location evidence="2">Cytoskeleton</location>
        <location evidence="2">Spindle</location>
    </subcellularLocation>
    <subcellularLocation>
        <location evidence="2">Cytoplasm</location>
        <location evidence="2">Cytoskeleton</location>
        <location evidence="2">Microtubule organizing center</location>
        <location evidence="2">Centrosome</location>
    </subcellularLocation>
    <subcellularLocation>
        <location evidence="4">Chromosome</location>
    </subcellularLocation>
    <subcellularLocation>
        <location evidence="4">Nucleus</location>
        <location evidence="4">Nucleoplasm</location>
    </subcellularLocation>
    <text evidence="2 4">After ligand activation, translocates from the cytoplasm to the nucleus (By similarity). The hormone-occupied receptor undergoes rapid exchange between chromatin and the nucleoplasmic compartment. In the presence of NR1D1 shows a time-dependent subcellular localization, localizing to the cytoplasm at ZT8 and to the nucleus at ZT20. Lacks this diurnal pattern of localization in the absence of NR1D1, localizing to both nucleus and the cytoplasm at ZT8 and ZT20. Upon dexamethasone binding associates with the glucocorticoid response elements of target genes (By similarity).</text>
</comment>
<comment type="domain">
    <text evidence="2">Composed of three domains: a modulating N-terminal domain, a DNA-binding domain and a C-terminal ligand-binding domain. The ligand-binding domain is required for correct chromosome segregation during mitosis although ligand binding is not required.</text>
</comment>
<comment type="PTM">
    <text evidence="1">Acetylation by CLOCK reduces its binding to glucocorticoid response elements and its transcriptional activity.</text>
</comment>
<comment type="PTM">
    <text evidence="2">Increased proteasome-mediated degradation in response to glucocorticoids.</text>
</comment>
<comment type="PTM">
    <text evidence="2 4">Phosphorylated in the absence of hormone; becomes hyperphosphorylated in the presence of glucocorticoid. The Ser-203, Ser-226 and Ser-404-phosphorylated forms are mainly cytoplasmic, and the Ser-211-phosphorylated form is nuclear. Phosphorylation at Ser-211 increases transcriptional activity. Phosphorylation at Ser-203, Ser-226 and Ser-404 decreases signaling capacity. Phosphorylation at Ser-404 may protect from glucocorticoid-induced apoptosis. Phosphorylation at Ser-203 and Ser-211 is not required in regulation of chromosome segregation. May be dephosphorylated by PPP5C, attenuates NR3C1 action.</text>
</comment>
<comment type="PTM">
    <text evidence="4">Ubiquitinated by UBR5, leading to its degradation: UBR5 specifically recognizes and binds ligand-bound NR3C1 when it is not associated with coactivators (NCOAs) (By similarity). In presence of NCOAs, the UBR5-degron is not accessible, preventing its ubiquitination and degradation (By similarity).</text>
</comment>
<comment type="PTM">
    <text evidence="3">Sumoylation at Lys-277 and Lys-293 negatively regulates its transcriptional activity. Sumoylation at Lys-703 positively regulates its transcriptional activity in the presence of RWDD3. Sumoylation at Lys-277 and Lys-293 is dispensable whereas sumoylation at Lys-703 is critical for the stimulatory effect of RWDD3 on its transcriptional activity. Heat shock increases sumoylation in a RWDD3-dependent manner.</text>
</comment>
<comment type="similarity">
    <text evidence="8">Belongs to the nuclear hormone receptor family. NR3 subfamily.</text>
</comment>
<accession>P79269</accession>
<evidence type="ECO:0000250" key="1"/>
<evidence type="ECO:0000250" key="2">
    <source>
        <dbReference type="UniProtKB" id="P04150"/>
    </source>
</evidence>
<evidence type="ECO:0000250" key="3">
    <source>
        <dbReference type="UniProtKB" id="P06536"/>
    </source>
</evidence>
<evidence type="ECO:0000250" key="4">
    <source>
        <dbReference type="UniProtKB" id="P06537"/>
    </source>
</evidence>
<evidence type="ECO:0000255" key="5">
    <source>
        <dbReference type="PROSITE-ProRule" id="PRU00407"/>
    </source>
</evidence>
<evidence type="ECO:0000255" key="6">
    <source>
        <dbReference type="PROSITE-ProRule" id="PRU01189"/>
    </source>
</evidence>
<evidence type="ECO:0000256" key="7">
    <source>
        <dbReference type="SAM" id="MobiDB-lite"/>
    </source>
</evidence>
<evidence type="ECO:0000305" key="8"/>
<evidence type="ECO:0007829" key="9">
    <source>
        <dbReference type="PDB" id="6BSE"/>
    </source>
</evidence>
<protein>
    <recommendedName>
        <fullName>Glucocorticoid receptor</fullName>
        <shortName>GR</shortName>
    </recommendedName>
    <alternativeName>
        <fullName>Nuclear receptor subfamily 3 group C member 1</fullName>
    </alternativeName>
</protein>
<name>GCR_SAGOE</name>
<proteinExistence type="evidence at protein level"/>
<dbReference type="EMBL" id="U87953">
    <property type="protein sequence ID" value="AAC51133.1"/>
    <property type="molecule type" value="mRNA"/>
</dbReference>
<dbReference type="PDB" id="6BSE">
    <property type="method" value="X-ray"/>
    <property type="resolution" value="2.35 A"/>
    <property type="chains" value="A/B=420-505"/>
</dbReference>
<dbReference type="PDB" id="6BSF">
    <property type="method" value="X-ray"/>
    <property type="resolution" value="2.40 A"/>
    <property type="chains" value="A/B=419-505"/>
</dbReference>
<dbReference type="PDBsum" id="6BSE"/>
<dbReference type="PDBsum" id="6BSF"/>
<dbReference type="SMR" id="P79269"/>
<dbReference type="GO" id="GO:0005813">
    <property type="term" value="C:centrosome"/>
    <property type="evidence" value="ECO:0007669"/>
    <property type="project" value="UniProtKB-SubCell"/>
</dbReference>
<dbReference type="GO" id="GO:0005694">
    <property type="term" value="C:chromosome"/>
    <property type="evidence" value="ECO:0007669"/>
    <property type="project" value="UniProtKB-SubCell"/>
</dbReference>
<dbReference type="GO" id="GO:0005737">
    <property type="term" value="C:cytoplasm"/>
    <property type="evidence" value="ECO:0000250"/>
    <property type="project" value="UniProtKB"/>
</dbReference>
<dbReference type="GO" id="GO:0005739">
    <property type="term" value="C:mitochondrion"/>
    <property type="evidence" value="ECO:0007669"/>
    <property type="project" value="UniProtKB-SubCell"/>
</dbReference>
<dbReference type="GO" id="GO:0016607">
    <property type="term" value="C:nuclear speck"/>
    <property type="evidence" value="ECO:0000250"/>
    <property type="project" value="UniProtKB"/>
</dbReference>
<dbReference type="GO" id="GO:0005634">
    <property type="term" value="C:nucleus"/>
    <property type="evidence" value="ECO:0000250"/>
    <property type="project" value="UniProtKB"/>
</dbReference>
<dbReference type="GO" id="GO:0005819">
    <property type="term" value="C:spindle"/>
    <property type="evidence" value="ECO:0007669"/>
    <property type="project" value="UniProtKB-SubCell"/>
</dbReference>
<dbReference type="GO" id="GO:0003700">
    <property type="term" value="F:DNA-binding transcription factor activity"/>
    <property type="evidence" value="ECO:0000250"/>
    <property type="project" value="UniProtKB"/>
</dbReference>
<dbReference type="GO" id="GO:0004883">
    <property type="term" value="F:nuclear glucocorticoid receptor activity"/>
    <property type="evidence" value="ECO:0007669"/>
    <property type="project" value="InterPro"/>
</dbReference>
<dbReference type="GO" id="GO:0004879">
    <property type="term" value="F:nuclear receptor activity"/>
    <property type="evidence" value="ECO:0000250"/>
    <property type="project" value="UniProtKB"/>
</dbReference>
<dbReference type="GO" id="GO:0043565">
    <property type="term" value="F:sequence-specific DNA binding"/>
    <property type="evidence" value="ECO:0007669"/>
    <property type="project" value="InterPro"/>
</dbReference>
<dbReference type="GO" id="GO:0005496">
    <property type="term" value="F:steroid binding"/>
    <property type="evidence" value="ECO:0000250"/>
    <property type="project" value="UniProtKB"/>
</dbReference>
<dbReference type="GO" id="GO:1990239">
    <property type="term" value="F:steroid hormone binding"/>
    <property type="evidence" value="ECO:0000250"/>
    <property type="project" value="UniProtKB"/>
</dbReference>
<dbReference type="GO" id="GO:0008270">
    <property type="term" value="F:zinc ion binding"/>
    <property type="evidence" value="ECO:0007669"/>
    <property type="project" value="UniProtKB-KW"/>
</dbReference>
<dbReference type="GO" id="GO:0071385">
    <property type="term" value="P:cellular response to glucocorticoid stimulus"/>
    <property type="evidence" value="ECO:0000250"/>
    <property type="project" value="UniProtKB"/>
</dbReference>
<dbReference type="GO" id="GO:0071383">
    <property type="term" value="P:cellular response to steroid hormone stimulus"/>
    <property type="evidence" value="ECO:0000250"/>
    <property type="project" value="UniProtKB"/>
</dbReference>
<dbReference type="GO" id="GO:0006325">
    <property type="term" value="P:chromatin organization"/>
    <property type="evidence" value="ECO:0007669"/>
    <property type="project" value="UniProtKB-KW"/>
</dbReference>
<dbReference type="GO" id="GO:0045944">
    <property type="term" value="P:positive regulation of transcription by RNA polymerase II"/>
    <property type="evidence" value="ECO:0000250"/>
    <property type="project" value="UniProtKB"/>
</dbReference>
<dbReference type="CDD" id="cd07172">
    <property type="entry name" value="NR_DBD_GR_PR"/>
    <property type="match status" value="1"/>
</dbReference>
<dbReference type="CDD" id="cd07076">
    <property type="entry name" value="NR_LBD_GR"/>
    <property type="match status" value="1"/>
</dbReference>
<dbReference type="FunFam" id="1.10.565.10:FF:000004">
    <property type="entry name" value="Androgen receptor variant"/>
    <property type="match status" value="1"/>
</dbReference>
<dbReference type="FunFam" id="3.30.50.10:FF:000022">
    <property type="entry name" value="glucocorticoid receptor isoform X1"/>
    <property type="match status" value="1"/>
</dbReference>
<dbReference type="Gene3D" id="3.30.50.10">
    <property type="entry name" value="Erythroid Transcription Factor GATA-1, subunit A"/>
    <property type="match status" value="1"/>
</dbReference>
<dbReference type="Gene3D" id="1.10.565.10">
    <property type="entry name" value="Retinoid X Receptor"/>
    <property type="match status" value="1"/>
</dbReference>
<dbReference type="InterPro" id="IPR001409">
    <property type="entry name" value="Glcrtcd_rcpt"/>
</dbReference>
<dbReference type="InterPro" id="IPR035500">
    <property type="entry name" value="NHR-like_dom_sf"/>
</dbReference>
<dbReference type="InterPro" id="IPR000536">
    <property type="entry name" value="Nucl_hrmn_rcpt_lig-bd"/>
</dbReference>
<dbReference type="InterPro" id="IPR050200">
    <property type="entry name" value="Nuclear_hormone_rcpt_NR3"/>
</dbReference>
<dbReference type="InterPro" id="IPR001723">
    <property type="entry name" value="Nuclear_hrmn_rcpt"/>
</dbReference>
<dbReference type="InterPro" id="IPR001628">
    <property type="entry name" value="Znf_hrmn_rcpt"/>
</dbReference>
<dbReference type="InterPro" id="IPR013088">
    <property type="entry name" value="Znf_NHR/GATA"/>
</dbReference>
<dbReference type="PANTHER" id="PTHR48092">
    <property type="entry name" value="KNIRPS-RELATED PROTEIN-RELATED"/>
    <property type="match status" value="1"/>
</dbReference>
<dbReference type="Pfam" id="PF02155">
    <property type="entry name" value="GCR"/>
    <property type="match status" value="1"/>
</dbReference>
<dbReference type="Pfam" id="PF00104">
    <property type="entry name" value="Hormone_recep"/>
    <property type="match status" value="1"/>
</dbReference>
<dbReference type="Pfam" id="PF00105">
    <property type="entry name" value="zf-C4"/>
    <property type="match status" value="1"/>
</dbReference>
<dbReference type="PRINTS" id="PR00528">
    <property type="entry name" value="GLCORTICOIDR"/>
</dbReference>
<dbReference type="PRINTS" id="PR00398">
    <property type="entry name" value="STRDHORMONER"/>
</dbReference>
<dbReference type="PRINTS" id="PR00047">
    <property type="entry name" value="STROIDFINGER"/>
</dbReference>
<dbReference type="SMART" id="SM00430">
    <property type="entry name" value="HOLI"/>
    <property type="match status" value="1"/>
</dbReference>
<dbReference type="SMART" id="SM00399">
    <property type="entry name" value="ZnF_C4"/>
    <property type="match status" value="1"/>
</dbReference>
<dbReference type="SUPFAM" id="SSF57716">
    <property type="entry name" value="Glucocorticoid receptor-like (DNA-binding domain)"/>
    <property type="match status" value="1"/>
</dbReference>
<dbReference type="SUPFAM" id="SSF48508">
    <property type="entry name" value="Nuclear receptor ligand-binding domain"/>
    <property type="match status" value="1"/>
</dbReference>
<dbReference type="PROSITE" id="PS51843">
    <property type="entry name" value="NR_LBD"/>
    <property type="match status" value="1"/>
</dbReference>
<dbReference type="PROSITE" id="PS00031">
    <property type="entry name" value="NUCLEAR_REC_DBD_1"/>
    <property type="match status" value="1"/>
</dbReference>
<dbReference type="PROSITE" id="PS51030">
    <property type="entry name" value="NUCLEAR_REC_DBD_2"/>
    <property type="match status" value="1"/>
</dbReference>
<gene>
    <name type="primary">NR3C1</name>
    <name type="synonym">GRL</name>
</gene>
<organism>
    <name type="scientific">Saguinus oedipus</name>
    <name type="common">Cotton-top tamarin</name>
    <dbReference type="NCBI Taxonomy" id="9490"/>
    <lineage>
        <taxon>Eukaryota</taxon>
        <taxon>Metazoa</taxon>
        <taxon>Chordata</taxon>
        <taxon>Craniata</taxon>
        <taxon>Vertebrata</taxon>
        <taxon>Euteleostomi</taxon>
        <taxon>Mammalia</taxon>
        <taxon>Eutheria</taxon>
        <taxon>Euarchontoglires</taxon>
        <taxon>Primates</taxon>
        <taxon>Haplorrhini</taxon>
        <taxon>Platyrrhini</taxon>
        <taxon>Cebidae</taxon>
        <taxon>Callitrichinae</taxon>
        <taxon>Saguinus</taxon>
    </lineage>
</organism>
<keyword id="KW-0002">3D-structure</keyword>
<keyword id="KW-0007">Acetylation</keyword>
<keyword id="KW-0156">Chromatin regulator</keyword>
<keyword id="KW-0158">Chromosome</keyword>
<keyword id="KW-0963">Cytoplasm</keyword>
<keyword id="KW-0206">Cytoskeleton</keyword>
<keyword id="KW-0238">DNA-binding</keyword>
<keyword id="KW-1017">Isopeptide bond</keyword>
<keyword id="KW-0446">Lipid-binding</keyword>
<keyword id="KW-0479">Metal-binding</keyword>
<keyword id="KW-0488">Methylation</keyword>
<keyword id="KW-0496">Mitochondrion</keyword>
<keyword id="KW-0539">Nucleus</keyword>
<keyword id="KW-0597">Phosphoprotein</keyword>
<keyword id="KW-0675">Receptor</keyword>
<keyword id="KW-0754">Steroid-binding</keyword>
<keyword id="KW-0804">Transcription</keyword>
<keyword id="KW-0805">Transcription regulation</keyword>
<keyword id="KW-0832">Ubl conjugation</keyword>
<keyword id="KW-0862">Zinc</keyword>
<keyword id="KW-0863">Zinc-finger</keyword>
<sequence>MDSKESLTPGKEENPSSVLTQERGNVMDFCKILRGGATLKVSVSSTSLAAASQSDSKQQRLLVDFPKGSVSNAQQPDLSKAVSLSMGLYMGETETKVMGNDLGFPQQGQISLSSGETDLQLLEESIANLNRSTSVPENPKSSASSSVSAAPKEKEFPKTHSDVSSEQQNLKGQTGTNGGNAKLCTADQSTFDILQDLEFSSGSPGKETNQSPWRSDLLIDENCLLSPLAGEEDSFLLEGNSNEDCKPLILPDTKPKIKDNGDLVLSSSSNVTLPQVKTEKEDFIELCTPGVIKQEKLSTVYCQASFPGANIIGNKMSAISIHGVSTSGGQMYHYDMNTASLSQQQDQKPIFNVIPPIPVGSENWNRCQGSGDDNLTSLGTLNFPGRTVFSNGYSSPSMRPDVSSPPSSSSTATTGPPPKLCLVCSDEASGCHYGVLTCGSCKVFFKRAVEGQHNYLCAGRNDCIIDKIRRKNCPACRYRKCLQAGMNLEARKTKKKIKGIQQATTGVSQETSENPANKTIVPATLPQLTPTLVSLLEVIEPEVLYAGYDSTVPDSTWRIMTTLNMLGGRQVIAAVKWAKAIPGFRNLHLDDQMTLLQYSWMFLMAFALGWRSYRQASSNLLCFAPDLIINEQRMTLPCMYDQCKHMLYVSSELHRLQVSYEEYLCMKTLLLLSSVPKDGLKSQELFDEIRMTYIKELGKAIVKREGNSSQNWQRFYQLTKLLDSMHEVVENLLNYCFQTFLDKTMSIEFPEMLAEIITNQLPKYSNGNIRKLLFHQK</sequence>
<reference key="1">
    <citation type="journal article" date="1997" name="J. Clin. Endocrinol. Metab.">
        <title>Cloning and expression of the glucocorticoid receptor from the squirrel monkey (Saimiri boliviensis boliviensis), a glucocorticoid-resistant primate.</title>
        <authorList>
            <person name="Reynolds P.D."/>
            <person name="Pittler S.J."/>
            <person name="Scammell J.G."/>
        </authorList>
    </citation>
    <scope>NUCLEOTIDE SEQUENCE [MRNA]</scope>
</reference>
<feature type="chain" id="PRO_0000053674" description="Glucocorticoid receptor">
    <location>
        <begin position="1"/>
        <end position="777"/>
    </location>
</feature>
<feature type="domain" description="NR LBD" evidence="6">
    <location>
        <begin position="524"/>
        <end position="758"/>
    </location>
</feature>
<feature type="DNA-binding region" description="Nuclear receptor" evidence="5">
    <location>
        <begin position="421"/>
        <end position="486"/>
    </location>
</feature>
<feature type="zinc finger region" description="NR C4-type" evidence="5">
    <location>
        <begin position="421"/>
        <end position="441"/>
    </location>
</feature>
<feature type="zinc finger region" description="NR C4-type" evidence="5">
    <location>
        <begin position="457"/>
        <end position="481"/>
    </location>
</feature>
<feature type="region of interest" description="Modulating">
    <location>
        <begin position="1"/>
        <end position="420"/>
    </location>
</feature>
<feature type="region of interest" description="Disordered" evidence="7">
    <location>
        <begin position="1"/>
        <end position="22"/>
    </location>
</feature>
<feature type="region of interest" description="Disordered" evidence="7">
    <location>
        <begin position="130"/>
        <end position="183"/>
    </location>
</feature>
<feature type="region of interest" description="Disordered" evidence="7">
    <location>
        <begin position="394"/>
        <end position="415"/>
    </location>
</feature>
<feature type="region of interest" description="Interaction with CLOCK" evidence="1">
    <location>
        <begin position="485"/>
        <end position="777"/>
    </location>
</feature>
<feature type="region of interest" description="Hinge">
    <location>
        <begin position="487"/>
        <end position="523"/>
    </location>
</feature>
<feature type="region of interest" description="Interaction with CRY1" evidence="1">
    <location>
        <begin position="532"/>
        <end position="697"/>
    </location>
</feature>
<feature type="compositionally biased region" description="Basic and acidic residues" evidence="7">
    <location>
        <begin position="1"/>
        <end position="14"/>
    </location>
</feature>
<feature type="compositionally biased region" description="Low complexity" evidence="7">
    <location>
        <begin position="134"/>
        <end position="150"/>
    </location>
</feature>
<feature type="compositionally biased region" description="Basic and acidic residues" evidence="7">
    <location>
        <begin position="151"/>
        <end position="163"/>
    </location>
</feature>
<feature type="compositionally biased region" description="Polar residues" evidence="7">
    <location>
        <begin position="164"/>
        <end position="174"/>
    </location>
</feature>
<feature type="compositionally biased region" description="Low complexity" evidence="7">
    <location>
        <begin position="394"/>
        <end position="414"/>
    </location>
</feature>
<feature type="modified residue" description="Phosphothreonine" evidence="2">
    <location>
        <position position="8"/>
    </location>
</feature>
<feature type="modified residue" description="Omega-N-methylarginine" evidence="4">
    <location>
        <position position="23"/>
    </location>
</feature>
<feature type="modified residue" description="Phosphoserine" evidence="2">
    <location>
        <position position="45"/>
    </location>
</feature>
<feature type="modified residue" description="Phosphoserine" evidence="4">
    <location>
        <position position="113"/>
    </location>
</feature>
<feature type="modified residue" description="Phosphoserine" evidence="2">
    <location>
        <position position="134"/>
    </location>
</feature>
<feature type="modified residue" description="Phosphoserine" evidence="4">
    <location>
        <position position="141"/>
    </location>
</feature>
<feature type="modified residue" description="Phosphoserine" evidence="2">
    <location>
        <position position="203"/>
    </location>
</feature>
<feature type="modified residue" description="Phosphoserine" evidence="2">
    <location>
        <position position="211"/>
    </location>
</feature>
<feature type="modified residue" description="Phosphoserine" evidence="2">
    <location>
        <position position="226"/>
    </location>
</feature>
<feature type="modified residue" description="Phosphoserine" evidence="2">
    <location>
        <position position="267"/>
    </location>
</feature>
<feature type="modified residue" description="Phosphoserine" evidence="2">
    <location>
        <position position="404"/>
    </location>
</feature>
<feature type="modified residue" description="N6-acetyllysine" evidence="2">
    <location>
        <position position="480"/>
    </location>
</feature>
<feature type="modified residue" description="N6-acetyllysine" evidence="2">
    <location>
        <position position="492"/>
    </location>
</feature>
<feature type="modified residue" description="N6-acetyllysine" evidence="2">
    <location>
        <position position="494"/>
    </location>
</feature>
<feature type="modified residue" description="N6-acetyllysine" evidence="2">
    <location>
        <position position="495"/>
    </location>
</feature>
<feature type="cross-link" description="Glycyl lysine isopeptide (Lys-Gly) (interchain with G-Cter in SUMO2)" evidence="2">
    <location>
        <position position="258"/>
    </location>
</feature>
<feature type="cross-link" description="Glycyl lysine isopeptide (Lys-Gly) (interchain with G-Cter in SUMO); alternate" evidence="2">
    <location>
        <position position="277"/>
    </location>
</feature>
<feature type="cross-link" description="Glycyl lysine isopeptide (Lys-Gly) (interchain with G-Cter in SUMO2); alternate" evidence="2">
    <location>
        <position position="277"/>
    </location>
</feature>
<feature type="cross-link" description="Glycyl lysine isopeptide (Lys-Gly) (interchain with G-Cter in SUMO); alternate" evidence="2">
    <location>
        <position position="293"/>
    </location>
</feature>
<feature type="cross-link" description="Glycyl lysine isopeptide (Lys-Gly) (interchain with G-Cter in SUMO2); alternate" evidence="2">
    <location>
        <position position="293"/>
    </location>
</feature>
<feature type="cross-link" description="Glycyl lysine isopeptide (Lys-Gly) (interchain with G-Cter in ubiquitin)" evidence="4">
    <location>
        <position position="419"/>
    </location>
</feature>
<feature type="cross-link" description="Glycyl lysine isopeptide (Lys-Gly) (interchain with G-Cter in SUMO)" evidence="2">
    <location>
        <position position="703"/>
    </location>
</feature>
<feature type="turn" evidence="9">
    <location>
        <begin position="422"/>
        <end position="424"/>
    </location>
</feature>
<feature type="strand" evidence="9">
    <location>
        <begin position="430"/>
        <end position="432"/>
    </location>
</feature>
<feature type="strand" evidence="9">
    <location>
        <begin position="435"/>
        <end position="437"/>
    </location>
</feature>
<feature type="helix" evidence="9">
    <location>
        <begin position="439"/>
        <end position="450"/>
    </location>
</feature>
<feature type="strand" evidence="9">
    <location>
        <begin position="458"/>
        <end position="461"/>
    </location>
</feature>
<feature type="turn" evidence="9">
    <location>
        <begin position="467"/>
        <end position="472"/>
    </location>
</feature>
<feature type="helix" evidence="9">
    <location>
        <begin position="474"/>
        <end position="483"/>
    </location>
</feature>